<dbReference type="EMBL" id="U19614">
    <property type="protein sequence ID" value="AAA69914.1"/>
    <property type="molecule type" value="mRNA"/>
</dbReference>
<dbReference type="EMBL" id="U20286">
    <property type="protein sequence ID" value="AAA69915.1"/>
    <property type="molecule type" value="mRNA"/>
</dbReference>
<dbReference type="EMBL" id="BC086987">
    <property type="protein sequence ID" value="AAH86987.1"/>
    <property type="molecule type" value="mRNA"/>
</dbReference>
<dbReference type="PIR" id="A56391">
    <property type="entry name" value="A56391"/>
</dbReference>
<dbReference type="PIR" id="I61730">
    <property type="entry name" value="I61730"/>
</dbReference>
<dbReference type="RefSeq" id="NP_659560.2">
    <molecule id="Q5PQX1-1"/>
    <property type="nucleotide sequence ID" value="NM_145092.2"/>
</dbReference>
<dbReference type="SMR" id="Q5PQX1"/>
<dbReference type="DIP" id="DIP-60963N"/>
<dbReference type="FunCoup" id="Q5PQX1">
    <property type="interactions" value="1103"/>
</dbReference>
<dbReference type="IntAct" id="Q5PQX1">
    <property type="interactions" value="7"/>
</dbReference>
<dbReference type="STRING" id="10116.ENSRNOP00000005280"/>
<dbReference type="GlyCosmos" id="Q5PQX1">
    <property type="glycosylation" value="1 site, No reported glycans"/>
</dbReference>
<dbReference type="GlyGen" id="Q5PQX1">
    <property type="glycosylation" value="2 sites"/>
</dbReference>
<dbReference type="iPTMnet" id="Q5PQX1"/>
<dbReference type="PhosphoSitePlus" id="Q5PQX1"/>
<dbReference type="PaxDb" id="10116-ENSRNOP00000005280"/>
<dbReference type="Ensembl" id="ENSRNOT00000005280.7">
    <molecule id="Q5PQX1-1"/>
    <property type="protein sequence ID" value="ENSRNOP00000005280.4"/>
    <property type="gene ID" value="ENSRNOG00000003946.9"/>
</dbReference>
<dbReference type="GeneID" id="246314"/>
<dbReference type="KEGG" id="rno:246314"/>
<dbReference type="UCSC" id="RGD:628851">
    <molecule id="Q5PQX1-1"/>
    <property type="organism name" value="rat"/>
</dbReference>
<dbReference type="AGR" id="RGD:628851"/>
<dbReference type="CTD" id="26092"/>
<dbReference type="RGD" id="628851">
    <property type="gene designation" value="Tor1aip1"/>
</dbReference>
<dbReference type="eggNOG" id="ENOG502QUV7">
    <property type="taxonomic scope" value="Eukaryota"/>
</dbReference>
<dbReference type="GeneTree" id="ENSGT00390000012166"/>
<dbReference type="HOGENOM" id="CLU_034263_0_1_1"/>
<dbReference type="InParanoid" id="Q5PQX1"/>
<dbReference type="OMA" id="NASFVKM"/>
<dbReference type="OrthoDB" id="70511at9989"/>
<dbReference type="Reactome" id="R-RNO-9013405">
    <property type="pathway name" value="RHOD GTPase cycle"/>
</dbReference>
<dbReference type="Reactome" id="R-RNO-9035034">
    <property type="pathway name" value="RHOF GTPase cycle"/>
</dbReference>
<dbReference type="PRO" id="PR:Q5PQX1"/>
<dbReference type="Proteomes" id="UP000002494">
    <property type="component" value="Chromosome 13"/>
</dbReference>
<dbReference type="Bgee" id="ENSRNOG00000003946">
    <property type="expression patterns" value="Expressed in testis and 19 other cell types or tissues"/>
</dbReference>
<dbReference type="GO" id="GO:0005635">
    <property type="term" value="C:nuclear envelope"/>
    <property type="evidence" value="ECO:0000314"/>
    <property type="project" value="RGD"/>
</dbReference>
<dbReference type="GO" id="GO:0005637">
    <property type="term" value="C:nuclear inner membrane"/>
    <property type="evidence" value="ECO:0007669"/>
    <property type="project" value="UniProtKB-SubCell"/>
</dbReference>
<dbReference type="GO" id="GO:0031965">
    <property type="term" value="C:nuclear membrane"/>
    <property type="evidence" value="ECO:0000318"/>
    <property type="project" value="GO_Central"/>
</dbReference>
<dbReference type="GO" id="GO:0005654">
    <property type="term" value="C:nucleoplasm"/>
    <property type="evidence" value="ECO:0007669"/>
    <property type="project" value="Ensembl"/>
</dbReference>
<dbReference type="GO" id="GO:0005634">
    <property type="term" value="C:nucleus"/>
    <property type="evidence" value="ECO:0000250"/>
    <property type="project" value="UniProtKB"/>
</dbReference>
<dbReference type="GO" id="GO:0001671">
    <property type="term" value="F:ATPase activator activity"/>
    <property type="evidence" value="ECO:0000250"/>
    <property type="project" value="UniProtKB"/>
</dbReference>
<dbReference type="GO" id="GO:0051117">
    <property type="term" value="F:ATPase binding"/>
    <property type="evidence" value="ECO:0000266"/>
    <property type="project" value="RGD"/>
</dbReference>
<dbReference type="GO" id="GO:0008092">
    <property type="term" value="F:cytoskeletal protein binding"/>
    <property type="evidence" value="ECO:0000266"/>
    <property type="project" value="RGD"/>
</dbReference>
<dbReference type="GO" id="GO:0005521">
    <property type="term" value="F:lamin binding"/>
    <property type="evidence" value="ECO:0000314"/>
    <property type="project" value="RGD"/>
</dbReference>
<dbReference type="GO" id="GO:0071763">
    <property type="term" value="P:nuclear membrane organization"/>
    <property type="evidence" value="ECO:0000266"/>
    <property type="project" value="RGD"/>
</dbReference>
<dbReference type="GO" id="GO:0032781">
    <property type="term" value="P:positive regulation of ATP-dependent activity"/>
    <property type="evidence" value="ECO:0000250"/>
    <property type="project" value="UniProtKB"/>
</dbReference>
<dbReference type="GO" id="GO:0090435">
    <property type="term" value="P:protein localization to nuclear envelope"/>
    <property type="evidence" value="ECO:0000266"/>
    <property type="project" value="RGD"/>
</dbReference>
<dbReference type="GO" id="GO:0034504">
    <property type="term" value="P:protein localization to nucleus"/>
    <property type="evidence" value="ECO:0000250"/>
    <property type="project" value="UniProtKB"/>
</dbReference>
<dbReference type="FunFam" id="3.40.50.12190:FF:000001">
    <property type="entry name" value="torsin-1A-interacting protein 1 isoform X1"/>
    <property type="match status" value="1"/>
</dbReference>
<dbReference type="Gene3D" id="3.40.50.12190">
    <property type="match status" value="1"/>
</dbReference>
<dbReference type="InterPro" id="IPR038599">
    <property type="entry name" value="LAP1C-like_C_sf"/>
</dbReference>
<dbReference type="InterPro" id="IPR008662">
    <property type="entry name" value="TOIP1/2"/>
</dbReference>
<dbReference type="InterPro" id="IPR046753">
    <property type="entry name" value="TOIP1/2_C"/>
</dbReference>
<dbReference type="InterPro" id="IPR046754">
    <property type="entry name" value="TOIP1/2_N"/>
</dbReference>
<dbReference type="PANTHER" id="PTHR18843">
    <property type="entry name" value="TORSIN-1A-INTERACTING PROTEIN"/>
    <property type="match status" value="1"/>
</dbReference>
<dbReference type="PANTHER" id="PTHR18843:SF6">
    <property type="entry name" value="TORSIN-1A-INTERACTING PROTEIN 1"/>
    <property type="match status" value="1"/>
</dbReference>
<dbReference type="Pfam" id="PF05609">
    <property type="entry name" value="LAP1_C"/>
    <property type="match status" value="1"/>
</dbReference>
<dbReference type="Pfam" id="PF20443">
    <property type="entry name" value="LAP1_N"/>
    <property type="match status" value="1"/>
</dbReference>
<organism>
    <name type="scientific">Rattus norvegicus</name>
    <name type="common">Rat</name>
    <dbReference type="NCBI Taxonomy" id="10116"/>
    <lineage>
        <taxon>Eukaryota</taxon>
        <taxon>Metazoa</taxon>
        <taxon>Chordata</taxon>
        <taxon>Craniata</taxon>
        <taxon>Vertebrata</taxon>
        <taxon>Euteleostomi</taxon>
        <taxon>Mammalia</taxon>
        <taxon>Eutheria</taxon>
        <taxon>Euarchontoglires</taxon>
        <taxon>Glires</taxon>
        <taxon>Rodentia</taxon>
        <taxon>Myomorpha</taxon>
        <taxon>Muroidea</taxon>
        <taxon>Muridae</taxon>
        <taxon>Murinae</taxon>
        <taxon>Rattus</taxon>
    </lineage>
</organism>
<gene>
    <name type="primary">Tor1aip1</name>
</gene>
<name>TOIP1_RAT</name>
<proteinExistence type="evidence at protein level"/>
<evidence type="ECO:0000250" key="1"/>
<evidence type="ECO:0000250" key="2">
    <source>
        <dbReference type="UniProtKB" id="Q5JTV8"/>
    </source>
</evidence>
<evidence type="ECO:0000255" key="3"/>
<evidence type="ECO:0000256" key="4">
    <source>
        <dbReference type="SAM" id="MobiDB-lite"/>
    </source>
</evidence>
<evidence type="ECO:0000269" key="5">
    <source>
    </source>
</evidence>
<evidence type="ECO:0000269" key="6">
    <source>
    </source>
</evidence>
<evidence type="ECO:0000269" key="7">
    <source>
    </source>
</evidence>
<evidence type="ECO:0000303" key="8">
    <source>
    </source>
</evidence>
<evidence type="ECO:0000305" key="9"/>
<evidence type="ECO:0000312" key="10">
    <source>
        <dbReference type="EMBL" id="AAA69914.1"/>
    </source>
</evidence>
<evidence type="ECO:0007744" key="11">
    <source>
    </source>
</evidence>
<feature type="chain" id="PRO_0000084355" description="Torsin-1A-interacting protein 1">
    <location>
        <begin position="1"/>
        <end position="583"/>
    </location>
</feature>
<feature type="topological domain" description="Nuclear" evidence="3 8">
    <location>
        <begin position="1"/>
        <end position="339"/>
    </location>
</feature>
<feature type="transmembrane region" description="Helical" evidence="3">
    <location>
        <begin position="340"/>
        <end position="360"/>
    </location>
</feature>
<feature type="topological domain" description="Perinuclear space" evidence="3">
    <location>
        <begin position="361"/>
        <end position="583"/>
    </location>
</feature>
<feature type="region of interest" description="Disordered" evidence="4">
    <location>
        <begin position="23"/>
        <end position="208"/>
    </location>
</feature>
<feature type="region of interest" description="Interaction with TOR1A" evidence="1">
    <location>
        <begin position="356"/>
        <end position="583"/>
    </location>
</feature>
<feature type="coiled-coil region" evidence="3">
    <location>
        <begin position="360"/>
        <end position="388"/>
    </location>
</feature>
<feature type="compositionally biased region" description="Basic and acidic residues" evidence="4">
    <location>
        <begin position="70"/>
        <end position="101"/>
    </location>
</feature>
<feature type="compositionally biased region" description="Basic and acidic residues" evidence="4">
    <location>
        <begin position="115"/>
        <end position="132"/>
    </location>
</feature>
<feature type="compositionally biased region" description="Polar residues" evidence="4">
    <location>
        <begin position="166"/>
        <end position="188"/>
    </location>
</feature>
<feature type="modified residue" description="Phosphoserine" evidence="11">
    <location>
        <position position="60"/>
    </location>
</feature>
<feature type="modified residue" description="Phosphoserine" evidence="2">
    <location>
        <position position="134"/>
    </location>
</feature>
<feature type="modified residue" description="Phosphoserine" evidence="11">
    <location>
        <position position="142"/>
    </location>
</feature>
<feature type="modified residue" description="Phosphoserine" evidence="2">
    <location>
        <position position="155"/>
    </location>
</feature>
<feature type="modified residue" description="Phosphoserine" evidence="11">
    <location>
        <position position="157"/>
    </location>
</feature>
<feature type="modified residue" description="Phosphoserine" evidence="2">
    <location>
        <position position="189"/>
    </location>
</feature>
<feature type="modified residue" description="Phosphothreonine" evidence="2">
    <location>
        <position position="222"/>
    </location>
</feature>
<feature type="modified residue" description="Phosphoserine" evidence="2">
    <location>
        <position position="228"/>
    </location>
</feature>
<feature type="modified residue" description="Phosphoserine" evidence="11">
    <location>
        <position position="231"/>
    </location>
</feature>
<feature type="modified residue" description="Phosphoserine" evidence="11">
    <location>
        <position position="242"/>
    </location>
</feature>
<feature type="modified residue" description="Phosphoserine" evidence="2">
    <location>
        <position position="316"/>
    </location>
</feature>
<feature type="glycosylation site" description="N-linked (GlcNAc...) asparagine" evidence="3">
    <location>
        <position position="399"/>
    </location>
</feature>
<feature type="cross-link" description="Glycyl lysine isopeptide (Lys-Gly) (interchain with G-Cter in SUMO2)" evidence="2">
    <location>
        <position position="309"/>
    </location>
</feature>
<feature type="splice variant" id="VSP_051776" description="In isoform 3." evidence="8">
    <location>
        <begin position="1"/>
        <end position="121"/>
    </location>
</feature>
<feature type="splice variant" id="VSP_051777" description="In isoform 2." evidence="8">
    <location>
        <begin position="220"/>
        <end position="246"/>
    </location>
</feature>
<feature type="splice variant" id="VSP_051778" description="In isoform 2." evidence="8">
    <original>TTAVQEFQNQMKQLQSKYQSQDEKLWKRGTTFLEKHLNSSLPRPQPAILLL</original>
    <variation>I</variation>
    <location>
        <begin position="362"/>
        <end position="412"/>
    </location>
</feature>
<sequence>MAGERWRAEGLGEGWAIYVTPRAPIREGRRRLATQNGDGSDAPAYETHPSRHGRREVRFSEEPPEVYGDFEPRAAKERSPGERRTPPEKFRSDSAKEEVRESAYNLRSRQRRQRGPQEAEEMKTRRSTRLEQHSQQAQQQLSPATSGRGLRDAQSLSEDRGEDEPSSQPVTSQTVSKKTVRTPETSVMSEDPISNLCRPPLRSPRPDASIVQHINPFEEGETEDDLESSYSDVTIRIRSRDSVESRDEAAVAAGHHPDSLWGLPHSRGDFTAHENQPSLLPTGCQKNPQEWVEQAVRMRTRMAYNNIQKSDFGNQSPSTSRQQAAVQPPDESSVKIKWWLLILVAALAMGIYWFFHTPVVETTAVQEFQNQMKQLQSKYQSQDEKLWKRGTTFLEKHLNSSLPRPQPAILLLTAAQDAAEVLKCLSEQIADAYSSFRSVRAIRIDGAGKAAQDSDLVKHEVDQELTDGFRNGQNAAVVHRFESLPAGSTLIFYKYCDHENAAFKDVALVLTVLLEEQTLEASLGLKEIEEKVRDFLKVKFTSSDTANSYNHMDPDKLNGLWSRISHLVLPVQPENALKAGSCL</sequence>
<protein>
    <recommendedName>
        <fullName>Torsin-1A-interacting protein 1</fullName>
    </recommendedName>
    <alternativeName>
        <fullName>Lamina-associated polypeptide 1B</fullName>
        <shortName>LAP1B</shortName>
    </alternativeName>
    <alternativeName>
        <fullName>Lamina-associated polypeptide 1C</fullName>
        <shortName>LAP1C</shortName>
    </alternativeName>
</protein>
<reference evidence="9 10" key="1">
    <citation type="journal article" date="1995" name="J. Biol. Chem.">
        <title>cDNA cloning and characterization of lamina-associated polypeptide 1C (LAP1C), an integral protein of the inner nuclear membrane.</title>
        <authorList>
            <person name="Martin L."/>
            <person name="Crimaudo C."/>
            <person name="Gerace L."/>
        </authorList>
    </citation>
    <scope>NUCLEOTIDE SEQUENCE [MRNA] (ISOFORMS 2 AND 3)</scope>
    <scope>SUBCELLULAR LOCATION</scope>
    <source>
        <strain evidence="10">Sprague-Dawley</strain>
        <tissue evidence="10">Liver</tissue>
    </source>
</reference>
<reference key="2">
    <citation type="journal article" date="2004" name="Genome Res.">
        <title>The status, quality, and expansion of the NIH full-length cDNA project: the Mammalian Gene Collection (MGC).</title>
        <authorList>
            <consortium name="The MGC Project Team"/>
        </authorList>
    </citation>
    <scope>NUCLEOTIDE SEQUENCE [LARGE SCALE MRNA] (ISOFORM 1)</scope>
    <source>
        <tissue>Kidney</tissue>
    </source>
</reference>
<reference key="3">
    <citation type="journal article" date="2005" name="FEBS J.">
        <title>Proteome analysis of a rat liver nuclear insoluble protein fraction and localization of a novel protein, ISP36, to compartments in the interchromatin space.</title>
        <authorList>
            <person name="Segawa M."/>
            <person name="Niino K."/>
            <person name="Mineki R."/>
            <person name="Kaga N."/>
            <person name="Murayama K."/>
            <person name="Sugimoto K."/>
            <person name="Watanabe Y."/>
            <person name="Furukawa K."/>
            <person name="Horigome T."/>
        </authorList>
    </citation>
    <scope>PROTEIN SEQUENCE OF 32-39 AND 152-160</scope>
    <scope>SUBCELLULAR LOCATION</scope>
    <source>
        <tissue>Liver</tissue>
    </source>
</reference>
<reference key="4">
    <citation type="journal article" date="2004" name="Am. J. Physiol.">
        <title>Accumulation of beta (m), a structural member of X,K-ATPase beta-subunit family, in nuclear envelopes of perinatal myocytes.</title>
        <authorList>
            <person name="Zhao H."/>
            <person name="Pestov N.B."/>
            <person name="Korneenko T.V."/>
            <person name="Shakhparonov M.I."/>
            <person name="Modyanov N.N."/>
        </authorList>
    </citation>
    <scope>INTERACTION WITH ATP1B4</scope>
</reference>
<reference key="5">
    <citation type="journal article" date="2012" name="Nat. Commun.">
        <title>Quantitative maps of protein phosphorylation sites across 14 different rat organs and tissues.</title>
        <authorList>
            <person name="Lundby A."/>
            <person name="Secher A."/>
            <person name="Lage K."/>
            <person name="Nordsborg N.B."/>
            <person name="Dmytriyev A."/>
            <person name="Lundby C."/>
            <person name="Olsen J.V."/>
        </authorList>
    </citation>
    <scope>PHOSPHORYLATION [LARGE SCALE ANALYSIS] AT SER-60; SER-142; SER-157; SER-231 AND SER-242</scope>
    <scope>IDENTIFICATION BY MASS SPECTROMETRY [LARGE SCALE ANALYSIS]</scope>
</reference>
<keyword id="KW-0025">Alternative splicing</keyword>
<keyword id="KW-0175">Coiled coil</keyword>
<keyword id="KW-0903">Direct protein sequencing</keyword>
<keyword id="KW-0325">Glycoprotein</keyword>
<keyword id="KW-1017">Isopeptide bond</keyword>
<keyword id="KW-0472">Membrane</keyword>
<keyword id="KW-0539">Nucleus</keyword>
<keyword id="KW-0597">Phosphoprotein</keyword>
<keyword id="KW-1185">Reference proteome</keyword>
<keyword id="KW-0812">Transmembrane</keyword>
<keyword id="KW-1133">Transmembrane helix</keyword>
<keyword id="KW-0832">Ubl conjugation</keyword>
<comment type="function">
    <text>Required for nuclear membrane integrity. Induces TOR1A and TOR1B ATPase activity and is required for their location on the nuclear membrane. Binds to A- and B-type lamins. Possible role in membrane attachment and assembly of the nuclear lamina.</text>
</comment>
<comment type="subunit">
    <text evidence="5">Interacts with ATP1B4. Interacts with TOR1A (ATP-bound). Interacts with TOR1B, TOR2A and TOR3A. Interacts with VIM.</text>
</comment>
<comment type="interaction">
    <interactant intactId="EBI-15644430">
        <id>Q5PQX1</id>
    </interactant>
    <interactant intactId="EBI-357231">
        <id>P62138</id>
        <label>Ppp1ca</label>
    </interactant>
    <organismsDiffer>false</organismsDiffer>
    <experiments>2</experiments>
</comment>
<comment type="interaction">
    <interactant intactId="EBI-15644430">
        <id>Q5PQX1</id>
    </interactant>
    <interactant intactId="EBI-80049">
        <id>P63088</id>
        <label>Ppp1cc</label>
    </interactant>
    <organismsDiffer>false</organismsDiffer>
    <experiments>2</experiments>
</comment>
<comment type="subcellular location">
    <subcellularLocation>
        <location evidence="6 7">Nucleus inner membrane</location>
        <topology evidence="6 7">Single-pass membrane protein</topology>
    </subcellularLocation>
</comment>
<comment type="alternative products">
    <event type="alternative splicing"/>
    <isoform>
        <id>Q5PQX1-1</id>
        <name>1</name>
        <sequence type="displayed"/>
    </isoform>
    <isoform>
        <id>Q5PQX1-2</id>
        <name evidence="7">2</name>
        <sequence type="described" ref="VSP_051777 VSP_051778"/>
    </isoform>
    <isoform>
        <id>Q5PQX1-3</id>
        <name evidence="7">3</name>
        <sequence type="described" ref="VSP_051776"/>
    </isoform>
</comment>
<comment type="similarity">
    <text evidence="9">Belongs to the TOR1AIP family.</text>
</comment>
<accession>Q5PQX1</accession>
<accession>Q62741</accession>
<accession>Q62754</accession>